<proteinExistence type="inferred from homology"/>
<organism>
    <name type="scientific">Staphylococcus aureus (strain MW2)</name>
    <dbReference type="NCBI Taxonomy" id="196620"/>
    <lineage>
        <taxon>Bacteria</taxon>
        <taxon>Bacillati</taxon>
        <taxon>Bacillota</taxon>
        <taxon>Bacilli</taxon>
        <taxon>Bacillales</taxon>
        <taxon>Staphylococcaceae</taxon>
        <taxon>Staphylococcus</taxon>
    </lineage>
</organism>
<reference key="1">
    <citation type="journal article" date="2002" name="Lancet">
        <title>Genome and virulence determinants of high virulence community-acquired MRSA.</title>
        <authorList>
            <person name="Baba T."/>
            <person name="Takeuchi F."/>
            <person name="Kuroda M."/>
            <person name="Yuzawa H."/>
            <person name="Aoki K."/>
            <person name="Oguchi A."/>
            <person name="Nagai Y."/>
            <person name="Iwama N."/>
            <person name="Asano K."/>
            <person name="Naimi T."/>
            <person name="Kuroda H."/>
            <person name="Cui L."/>
            <person name="Yamamoto K."/>
            <person name="Hiramatsu K."/>
        </authorList>
    </citation>
    <scope>NUCLEOTIDE SEQUENCE [LARGE SCALE GENOMIC DNA]</scope>
    <source>
        <strain>MW2</strain>
    </source>
</reference>
<gene>
    <name type="ordered locus">MW1250</name>
</gene>
<keyword id="KW-0413">Isomerase</keyword>
<name>Y1250_STAAW</name>
<feature type="initiator methionine" description="Removed" evidence="1">
    <location>
        <position position="1"/>
    </location>
</feature>
<feature type="chain" id="PRO_0000209545" description="Probable tautomerase MW1250">
    <location>
        <begin position="2"/>
        <end position="61"/>
    </location>
</feature>
<feature type="active site" description="Proton acceptor; via imino nitrogen" evidence="1">
    <location>
        <position position="2"/>
    </location>
</feature>
<sequence length="61" mass="6744">MPIVNVKLLEGRSDEQLKNLVSEVTDAVEKTTGANRQAIHVVIEEMKPNHYGVAGVRKSDQ</sequence>
<protein>
    <recommendedName>
        <fullName>Probable tautomerase MW1250</fullName>
        <ecNumber>5.3.2.-</ecNumber>
    </recommendedName>
</protein>
<dbReference type="EC" id="5.3.2.-"/>
<dbReference type="EMBL" id="BA000033">
    <property type="protein sequence ID" value="BAB95115.1"/>
    <property type="status" value="ALT_INIT"/>
    <property type="molecule type" value="Genomic_DNA"/>
</dbReference>
<dbReference type="RefSeq" id="WP_001123276.1">
    <property type="nucleotide sequence ID" value="NC_003923.1"/>
</dbReference>
<dbReference type="SMR" id="P67527"/>
<dbReference type="KEGG" id="sam:MW1250"/>
<dbReference type="HOGENOM" id="CLU_148073_5_1_9"/>
<dbReference type="GO" id="GO:0016853">
    <property type="term" value="F:isomerase activity"/>
    <property type="evidence" value="ECO:0007669"/>
    <property type="project" value="UniProtKB-KW"/>
</dbReference>
<dbReference type="CDD" id="cd00491">
    <property type="entry name" value="4Oxalocrotonate_Tautomerase"/>
    <property type="match status" value="1"/>
</dbReference>
<dbReference type="Gene3D" id="3.30.429.10">
    <property type="entry name" value="Macrophage Migration Inhibitory Factor"/>
    <property type="match status" value="1"/>
</dbReference>
<dbReference type="InterPro" id="IPR018191">
    <property type="entry name" value="4-OT"/>
</dbReference>
<dbReference type="InterPro" id="IPR004370">
    <property type="entry name" value="4-OT-like_dom"/>
</dbReference>
<dbReference type="InterPro" id="IPR014347">
    <property type="entry name" value="Tautomerase/MIF_sf"/>
</dbReference>
<dbReference type="NCBIfam" id="NF002571">
    <property type="entry name" value="PRK02220.1"/>
    <property type="match status" value="1"/>
</dbReference>
<dbReference type="NCBIfam" id="TIGR00013">
    <property type="entry name" value="taut"/>
    <property type="match status" value="1"/>
</dbReference>
<dbReference type="PANTHER" id="PTHR35530:SF1">
    <property type="entry name" value="2-HYDROXYMUCONATE TAUTOMERASE"/>
    <property type="match status" value="1"/>
</dbReference>
<dbReference type="PANTHER" id="PTHR35530">
    <property type="entry name" value="TAUTOMERASE-RELATED"/>
    <property type="match status" value="1"/>
</dbReference>
<dbReference type="Pfam" id="PF01361">
    <property type="entry name" value="Tautomerase"/>
    <property type="match status" value="1"/>
</dbReference>
<dbReference type="SUPFAM" id="SSF55331">
    <property type="entry name" value="Tautomerase/MIF"/>
    <property type="match status" value="1"/>
</dbReference>
<accession>P67527</accession>
<accession>Q99UB8</accession>
<evidence type="ECO:0000250" key="1"/>
<evidence type="ECO:0000305" key="2"/>
<comment type="similarity">
    <text evidence="2">Belongs to the 4-oxalocrotonate tautomerase family.</text>
</comment>
<comment type="sequence caution" evidence="2">
    <conflict type="erroneous initiation">
        <sequence resource="EMBL-CDS" id="BAB95115"/>
    </conflict>
</comment>